<evidence type="ECO:0000255" key="1">
    <source>
        <dbReference type="HAMAP-Rule" id="MF_01662"/>
    </source>
</evidence>
<organism>
    <name type="scientific">Escherichia coli O6:H1 (strain CFT073 / ATCC 700928 / UPEC)</name>
    <dbReference type="NCBI Taxonomy" id="199310"/>
    <lineage>
        <taxon>Bacteria</taxon>
        <taxon>Pseudomonadati</taxon>
        <taxon>Pseudomonadota</taxon>
        <taxon>Gammaproteobacteria</taxon>
        <taxon>Enterobacterales</taxon>
        <taxon>Enterobacteriaceae</taxon>
        <taxon>Escherichia</taxon>
    </lineage>
</organism>
<accession>P0AEN9</accession>
<accession>P11555</accession>
<accession>Q46923</accession>
<protein>
    <recommendedName>
        <fullName evidence="1">L-fucose mutarotase</fullName>
        <ecNumber evidence="1">5.1.3.29</ecNumber>
    </recommendedName>
    <alternativeName>
        <fullName evidence="1">Fucose 1-epimerase</fullName>
    </alternativeName>
    <alternativeName>
        <fullName evidence="1">Type-2 mutarotase</fullName>
    </alternativeName>
</protein>
<keyword id="KW-0119">Carbohydrate metabolism</keyword>
<keyword id="KW-0963">Cytoplasm</keyword>
<keyword id="KW-0294">Fucose metabolism</keyword>
<keyword id="KW-0413">Isomerase</keyword>
<keyword id="KW-1185">Reference proteome</keyword>
<reference key="1">
    <citation type="journal article" date="2002" name="Proc. Natl. Acad. Sci. U.S.A.">
        <title>Extensive mosaic structure revealed by the complete genome sequence of uropathogenic Escherichia coli.</title>
        <authorList>
            <person name="Welch R.A."/>
            <person name="Burland V."/>
            <person name="Plunkett G. III"/>
            <person name="Redford P."/>
            <person name="Roesch P."/>
            <person name="Rasko D."/>
            <person name="Buckles E.L."/>
            <person name="Liou S.-R."/>
            <person name="Boutin A."/>
            <person name="Hackett J."/>
            <person name="Stroud D."/>
            <person name="Mayhew G.F."/>
            <person name="Rose D.J."/>
            <person name="Zhou S."/>
            <person name="Schwartz D.C."/>
            <person name="Perna N.T."/>
            <person name="Mobley H.L.T."/>
            <person name="Donnenberg M.S."/>
            <person name="Blattner F.R."/>
        </authorList>
    </citation>
    <scope>NUCLEOTIDE SEQUENCE [LARGE SCALE GENOMIC DNA]</scope>
    <source>
        <strain>CFT073 / ATCC 700928 / UPEC</strain>
    </source>
</reference>
<dbReference type="EC" id="5.1.3.29" evidence="1"/>
<dbReference type="EMBL" id="AE014075">
    <property type="protein sequence ID" value="AAN81819.1"/>
    <property type="molecule type" value="Genomic_DNA"/>
</dbReference>
<dbReference type="RefSeq" id="WP_000920840.1">
    <property type="nucleotide sequence ID" value="NZ_CP051263.1"/>
</dbReference>
<dbReference type="SMR" id="P0AEN9"/>
<dbReference type="STRING" id="199310.c3374"/>
<dbReference type="GeneID" id="93779194"/>
<dbReference type="KEGG" id="ecc:c3374"/>
<dbReference type="eggNOG" id="COG4154">
    <property type="taxonomic scope" value="Bacteria"/>
</dbReference>
<dbReference type="HOGENOM" id="CLU_120075_1_0_6"/>
<dbReference type="BioCyc" id="ECOL199310:C3374-MONOMER"/>
<dbReference type="UniPathway" id="UPA00956"/>
<dbReference type="Proteomes" id="UP000001410">
    <property type="component" value="Chromosome"/>
</dbReference>
<dbReference type="GO" id="GO:0005737">
    <property type="term" value="C:cytoplasm"/>
    <property type="evidence" value="ECO:0007669"/>
    <property type="project" value="UniProtKB-SubCell"/>
</dbReference>
<dbReference type="GO" id="GO:0042806">
    <property type="term" value="F:fucose binding"/>
    <property type="evidence" value="ECO:0007669"/>
    <property type="project" value="InterPro"/>
</dbReference>
<dbReference type="GO" id="GO:0036373">
    <property type="term" value="F:L-fucose mutarotase activity"/>
    <property type="evidence" value="ECO:0007669"/>
    <property type="project" value="UniProtKB-EC"/>
</dbReference>
<dbReference type="GO" id="GO:0036065">
    <property type="term" value="P:fucosylation"/>
    <property type="evidence" value="ECO:0007669"/>
    <property type="project" value="TreeGrafter"/>
</dbReference>
<dbReference type="GO" id="GO:0042354">
    <property type="term" value="P:L-fucose metabolic process"/>
    <property type="evidence" value="ECO:0007669"/>
    <property type="project" value="UniProtKB-UniRule"/>
</dbReference>
<dbReference type="FunFam" id="3.40.1650.10:FF:000001">
    <property type="entry name" value="L-fucose mutarotase"/>
    <property type="match status" value="1"/>
</dbReference>
<dbReference type="Gene3D" id="3.40.1650.10">
    <property type="entry name" value="RbsD-like domain"/>
    <property type="match status" value="1"/>
</dbReference>
<dbReference type="HAMAP" id="MF_01662">
    <property type="entry name" value="L_fucose_rotase"/>
    <property type="match status" value="1"/>
</dbReference>
<dbReference type="InterPro" id="IPR023751">
    <property type="entry name" value="L-fucose_mutarotase"/>
</dbReference>
<dbReference type="InterPro" id="IPR023750">
    <property type="entry name" value="RbsD-like_sf"/>
</dbReference>
<dbReference type="InterPro" id="IPR050443">
    <property type="entry name" value="RbsD/FucU_mutarotase"/>
</dbReference>
<dbReference type="InterPro" id="IPR007721">
    <property type="entry name" value="RbsD_FucU"/>
</dbReference>
<dbReference type="NCBIfam" id="NF011949">
    <property type="entry name" value="PRK15420.1"/>
    <property type="match status" value="1"/>
</dbReference>
<dbReference type="PANTHER" id="PTHR31690">
    <property type="entry name" value="FUCOSE MUTAROTASE"/>
    <property type="match status" value="1"/>
</dbReference>
<dbReference type="PANTHER" id="PTHR31690:SF4">
    <property type="entry name" value="FUCOSE MUTAROTASE"/>
    <property type="match status" value="1"/>
</dbReference>
<dbReference type="Pfam" id="PF05025">
    <property type="entry name" value="RbsD_FucU"/>
    <property type="match status" value="1"/>
</dbReference>
<dbReference type="SUPFAM" id="SSF102546">
    <property type="entry name" value="RbsD-like"/>
    <property type="match status" value="1"/>
</dbReference>
<comment type="function">
    <text evidence="1">Involved in the anomeric conversion of L-fucose.</text>
</comment>
<comment type="catalytic activity">
    <reaction evidence="1">
        <text>alpha-L-fucose = beta-L-fucose</text>
        <dbReference type="Rhea" id="RHEA:25580"/>
        <dbReference type="ChEBI" id="CHEBI:42548"/>
        <dbReference type="ChEBI" id="CHEBI:42589"/>
        <dbReference type="EC" id="5.1.3.29"/>
    </reaction>
</comment>
<comment type="pathway">
    <text evidence="1">Carbohydrate metabolism; L-fucose metabolism.</text>
</comment>
<comment type="subunit">
    <text evidence="1">Homodecamer.</text>
</comment>
<comment type="subcellular location">
    <subcellularLocation>
        <location evidence="1">Cytoplasm</location>
    </subcellularLocation>
</comment>
<comment type="similarity">
    <text evidence="1">Belongs to the RbsD / FucU family. FucU mutarotase subfamily.</text>
</comment>
<name>FUCM_ECOL6</name>
<proteinExistence type="inferred from homology"/>
<feature type="chain" id="PRO_0000087381" description="L-fucose mutarotase">
    <location>
        <begin position="1"/>
        <end position="140"/>
    </location>
</feature>
<feature type="active site" description="Proton donor" evidence="1">
    <location>
        <position position="22"/>
    </location>
</feature>
<feature type="binding site" evidence="1">
    <location>
        <position position="30"/>
    </location>
    <ligand>
        <name>substrate</name>
    </ligand>
</feature>
<feature type="binding site" evidence="1">
    <location>
        <position position="107"/>
    </location>
    <ligand>
        <name>substrate</name>
    </ligand>
</feature>
<feature type="binding site" evidence="1">
    <location>
        <begin position="129"/>
        <end position="131"/>
    </location>
    <ligand>
        <name>substrate</name>
    </ligand>
</feature>
<sequence length="140" mass="15473">MLKTISPLISPELLKVLAEMGHGDEIIFSDAHFPAHSMGPQVIRADGLLVSDLLQAIIPLFELDSYAPPLVMMAAVEGDTLDPEVERRYRNALSLQAPCPDIIRINRFAFYERAQKAFAIVITGERAKYGNILLKKGVTP</sequence>
<gene>
    <name evidence="1" type="primary">fucU</name>
    <name type="ordered locus">c3374</name>
</gene>